<dbReference type="EMBL" id="CP000388">
    <property type="protein sequence ID" value="ABG41687.1"/>
    <property type="molecule type" value="Genomic_DNA"/>
</dbReference>
<dbReference type="RefSeq" id="WP_006993166.1">
    <property type="nucleotide sequence ID" value="NC_008228.1"/>
</dbReference>
<dbReference type="SMR" id="Q15R01"/>
<dbReference type="STRING" id="342610.Patl_3181"/>
<dbReference type="KEGG" id="pat:Patl_3181"/>
<dbReference type="eggNOG" id="COG0268">
    <property type="taxonomic scope" value="Bacteria"/>
</dbReference>
<dbReference type="HOGENOM" id="CLU_160655_4_0_6"/>
<dbReference type="OrthoDB" id="9807974at2"/>
<dbReference type="Proteomes" id="UP000001981">
    <property type="component" value="Chromosome"/>
</dbReference>
<dbReference type="GO" id="GO:0005829">
    <property type="term" value="C:cytosol"/>
    <property type="evidence" value="ECO:0007669"/>
    <property type="project" value="TreeGrafter"/>
</dbReference>
<dbReference type="GO" id="GO:0015935">
    <property type="term" value="C:small ribosomal subunit"/>
    <property type="evidence" value="ECO:0007669"/>
    <property type="project" value="TreeGrafter"/>
</dbReference>
<dbReference type="GO" id="GO:0070181">
    <property type="term" value="F:small ribosomal subunit rRNA binding"/>
    <property type="evidence" value="ECO:0007669"/>
    <property type="project" value="TreeGrafter"/>
</dbReference>
<dbReference type="GO" id="GO:0003735">
    <property type="term" value="F:structural constituent of ribosome"/>
    <property type="evidence" value="ECO:0007669"/>
    <property type="project" value="InterPro"/>
</dbReference>
<dbReference type="GO" id="GO:0006412">
    <property type="term" value="P:translation"/>
    <property type="evidence" value="ECO:0007669"/>
    <property type="project" value="UniProtKB-UniRule"/>
</dbReference>
<dbReference type="FunFam" id="1.20.58.110:FF:000001">
    <property type="entry name" value="30S ribosomal protein S20"/>
    <property type="match status" value="1"/>
</dbReference>
<dbReference type="Gene3D" id="1.20.58.110">
    <property type="entry name" value="Ribosomal protein S20"/>
    <property type="match status" value="1"/>
</dbReference>
<dbReference type="HAMAP" id="MF_00500">
    <property type="entry name" value="Ribosomal_bS20"/>
    <property type="match status" value="1"/>
</dbReference>
<dbReference type="InterPro" id="IPR002583">
    <property type="entry name" value="Ribosomal_bS20"/>
</dbReference>
<dbReference type="InterPro" id="IPR036510">
    <property type="entry name" value="Ribosomal_bS20_sf"/>
</dbReference>
<dbReference type="NCBIfam" id="TIGR00029">
    <property type="entry name" value="S20"/>
    <property type="match status" value="1"/>
</dbReference>
<dbReference type="PANTHER" id="PTHR33398">
    <property type="entry name" value="30S RIBOSOMAL PROTEIN S20"/>
    <property type="match status" value="1"/>
</dbReference>
<dbReference type="PANTHER" id="PTHR33398:SF1">
    <property type="entry name" value="SMALL RIBOSOMAL SUBUNIT PROTEIN BS20C"/>
    <property type="match status" value="1"/>
</dbReference>
<dbReference type="Pfam" id="PF01649">
    <property type="entry name" value="Ribosomal_S20p"/>
    <property type="match status" value="1"/>
</dbReference>
<dbReference type="SUPFAM" id="SSF46992">
    <property type="entry name" value="Ribosomal protein S20"/>
    <property type="match status" value="1"/>
</dbReference>
<accession>Q15R01</accession>
<comment type="function">
    <text evidence="1">Binds directly to 16S ribosomal RNA.</text>
</comment>
<comment type="similarity">
    <text evidence="1">Belongs to the bacterial ribosomal protein bS20 family.</text>
</comment>
<reference key="1">
    <citation type="submission" date="2006-06" db="EMBL/GenBank/DDBJ databases">
        <title>Complete sequence of Pseudoalteromonas atlantica T6c.</title>
        <authorList>
            <consortium name="US DOE Joint Genome Institute"/>
            <person name="Copeland A."/>
            <person name="Lucas S."/>
            <person name="Lapidus A."/>
            <person name="Barry K."/>
            <person name="Detter J.C."/>
            <person name="Glavina del Rio T."/>
            <person name="Hammon N."/>
            <person name="Israni S."/>
            <person name="Dalin E."/>
            <person name="Tice H."/>
            <person name="Pitluck S."/>
            <person name="Saunders E."/>
            <person name="Brettin T."/>
            <person name="Bruce D."/>
            <person name="Han C."/>
            <person name="Tapia R."/>
            <person name="Gilna P."/>
            <person name="Schmutz J."/>
            <person name="Larimer F."/>
            <person name="Land M."/>
            <person name="Hauser L."/>
            <person name="Kyrpides N."/>
            <person name="Kim E."/>
            <person name="Karls A.C."/>
            <person name="Bartlett D."/>
            <person name="Higgins B.P."/>
            <person name="Richardson P."/>
        </authorList>
    </citation>
    <scope>NUCLEOTIDE SEQUENCE [LARGE SCALE GENOMIC DNA]</scope>
    <source>
        <strain>T6c / ATCC BAA-1087</strain>
    </source>
</reference>
<organism>
    <name type="scientific">Pseudoalteromonas atlantica (strain T6c / ATCC BAA-1087)</name>
    <dbReference type="NCBI Taxonomy" id="3042615"/>
    <lineage>
        <taxon>Bacteria</taxon>
        <taxon>Pseudomonadati</taxon>
        <taxon>Pseudomonadota</taxon>
        <taxon>Gammaproteobacteria</taxon>
        <taxon>Alteromonadales</taxon>
        <taxon>Alteromonadaceae</taxon>
        <taxon>Paraglaciecola</taxon>
    </lineage>
</organism>
<feature type="chain" id="PRO_1000014629" description="Small ribosomal subunit protein bS20">
    <location>
        <begin position="1"/>
        <end position="87"/>
    </location>
</feature>
<feature type="region of interest" description="Disordered" evidence="2">
    <location>
        <begin position="1"/>
        <end position="31"/>
    </location>
</feature>
<feature type="compositionally biased region" description="Basic residues" evidence="2">
    <location>
        <begin position="1"/>
        <end position="27"/>
    </location>
</feature>
<sequence>MANIKSAKKRALQSERRRQHNASRRSMTRTSLKKVLAAIASGDKASAQAAFAAATPLIDRMATKGLIHKNKAARHKSRLSAQIKALA</sequence>
<gene>
    <name evidence="1" type="primary">rpsT</name>
    <name type="ordered locus">Patl_3181</name>
</gene>
<keyword id="KW-0687">Ribonucleoprotein</keyword>
<keyword id="KW-0689">Ribosomal protein</keyword>
<keyword id="KW-0694">RNA-binding</keyword>
<keyword id="KW-0699">rRNA-binding</keyword>
<proteinExistence type="inferred from homology"/>
<protein>
    <recommendedName>
        <fullName evidence="1">Small ribosomal subunit protein bS20</fullName>
    </recommendedName>
    <alternativeName>
        <fullName evidence="3">30S ribosomal protein S20</fullName>
    </alternativeName>
</protein>
<evidence type="ECO:0000255" key="1">
    <source>
        <dbReference type="HAMAP-Rule" id="MF_00500"/>
    </source>
</evidence>
<evidence type="ECO:0000256" key="2">
    <source>
        <dbReference type="SAM" id="MobiDB-lite"/>
    </source>
</evidence>
<evidence type="ECO:0000305" key="3"/>
<name>RS20_PSEA6</name>